<evidence type="ECO:0000255" key="1">
    <source>
        <dbReference type="HAMAP-Rule" id="MF_00046"/>
    </source>
</evidence>
<sequence>MKDLRMVFKSRMNNIHFVGIGGSGMSGIAEVLHNLNYSVSGSDISQNKITDRLEKMGCQIYHKHHQDNIKNAQVIVVSSAIKDNNLEVIKAHQLNIPVVPRAEMLAELMRFRFGIAIAGTHGKTTTTSIITHILNVAELDPTYIIGGILNSSGINAKLGESDYLIAEADESDASFLHLQPMLSVITNIDYDHMVTYDNDYQNLKDAFIKFSANLPFYGACIMCADDEGVNEILNSIHRPLITYGFNNGTDIQAVNVKQVGMQMYFDVIYDKYTKQIPIKLNLIGKHNILNTLAAIGICCELNIKTNIIQKALANFSGVARRLDHHGKLNINNAQVSLFDDYAHHPKEISAVFESLKNTYQDKRLVVIFQPHRYSRTRDLFDDFVYTLSSADILILLNIYPAQEKPIAHINSSTLANAIRRSSGLNPMVIKNPKEILTVLPSIVNNNDILLILGAGDIHILPDLLKSNYI</sequence>
<accession>A1AX27</accession>
<organism>
    <name type="scientific">Ruthia magnifica subsp. Calyptogena magnifica</name>
    <dbReference type="NCBI Taxonomy" id="413404"/>
    <lineage>
        <taxon>Bacteria</taxon>
        <taxon>Pseudomonadati</taxon>
        <taxon>Pseudomonadota</taxon>
        <taxon>Gammaproteobacteria</taxon>
        <taxon>Candidatus Pseudothioglobaceae</taxon>
        <taxon>Candidatus Ruthturnera</taxon>
    </lineage>
</organism>
<comment type="function">
    <text evidence="1">Cell wall formation.</text>
</comment>
<comment type="catalytic activity">
    <reaction evidence="1">
        <text>UDP-N-acetyl-alpha-D-muramate + L-alanine + ATP = UDP-N-acetyl-alpha-D-muramoyl-L-alanine + ADP + phosphate + H(+)</text>
        <dbReference type="Rhea" id="RHEA:23372"/>
        <dbReference type="ChEBI" id="CHEBI:15378"/>
        <dbReference type="ChEBI" id="CHEBI:30616"/>
        <dbReference type="ChEBI" id="CHEBI:43474"/>
        <dbReference type="ChEBI" id="CHEBI:57972"/>
        <dbReference type="ChEBI" id="CHEBI:70757"/>
        <dbReference type="ChEBI" id="CHEBI:83898"/>
        <dbReference type="ChEBI" id="CHEBI:456216"/>
        <dbReference type="EC" id="6.3.2.8"/>
    </reaction>
</comment>
<comment type="pathway">
    <text evidence="1">Cell wall biogenesis; peptidoglycan biosynthesis.</text>
</comment>
<comment type="subcellular location">
    <subcellularLocation>
        <location evidence="1">Cytoplasm</location>
    </subcellularLocation>
</comment>
<comment type="similarity">
    <text evidence="1">Belongs to the MurCDEF family.</text>
</comment>
<dbReference type="EC" id="6.3.2.8" evidence="1"/>
<dbReference type="EMBL" id="CP000488">
    <property type="protein sequence ID" value="ABL02484.1"/>
    <property type="molecule type" value="Genomic_DNA"/>
</dbReference>
<dbReference type="RefSeq" id="WP_011738109.1">
    <property type="nucleotide sequence ID" value="NC_008610.1"/>
</dbReference>
<dbReference type="SMR" id="A1AX27"/>
<dbReference type="STRING" id="413404.Rmag_0757"/>
<dbReference type="KEGG" id="rma:Rmag_0757"/>
<dbReference type="eggNOG" id="COG0773">
    <property type="taxonomic scope" value="Bacteria"/>
</dbReference>
<dbReference type="HOGENOM" id="CLU_028104_2_2_6"/>
<dbReference type="OrthoDB" id="9804126at2"/>
<dbReference type="UniPathway" id="UPA00219"/>
<dbReference type="Proteomes" id="UP000002587">
    <property type="component" value="Chromosome"/>
</dbReference>
<dbReference type="GO" id="GO:0005737">
    <property type="term" value="C:cytoplasm"/>
    <property type="evidence" value="ECO:0007669"/>
    <property type="project" value="UniProtKB-SubCell"/>
</dbReference>
<dbReference type="GO" id="GO:0005524">
    <property type="term" value="F:ATP binding"/>
    <property type="evidence" value="ECO:0007669"/>
    <property type="project" value="UniProtKB-UniRule"/>
</dbReference>
<dbReference type="GO" id="GO:0008763">
    <property type="term" value="F:UDP-N-acetylmuramate-L-alanine ligase activity"/>
    <property type="evidence" value="ECO:0007669"/>
    <property type="project" value="UniProtKB-UniRule"/>
</dbReference>
<dbReference type="GO" id="GO:0051301">
    <property type="term" value="P:cell division"/>
    <property type="evidence" value="ECO:0007669"/>
    <property type="project" value="UniProtKB-KW"/>
</dbReference>
<dbReference type="GO" id="GO:0071555">
    <property type="term" value="P:cell wall organization"/>
    <property type="evidence" value="ECO:0007669"/>
    <property type="project" value="UniProtKB-KW"/>
</dbReference>
<dbReference type="GO" id="GO:0009252">
    <property type="term" value="P:peptidoglycan biosynthetic process"/>
    <property type="evidence" value="ECO:0007669"/>
    <property type="project" value="UniProtKB-UniRule"/>
</dbReference>
<dbReference type="GO" id="GO:0008360">
    <property type="term" value="P:regulation of cell shape"/>
    <property type="evidence" value="ECO:0007669"/>
    <property type="project" value="UniProtKB-KW"/>
</dbReference>
<dbReference type="Gene3D" id="3.90.190.20">
    <property type="entry name" value="Mur ligase, C-terminal domain"/>
    <property type="match status" value="1"/>
</dbReference>
<dbReference type="Gene3D" id="3.40.1190.10">
    <property type="entry name" value="Mur-like, catalytic domain"/>
    <property type="match status" value="1"/>
</dbReference>
<dbReference type="Gene3D" id="3.40.50.720">
    <property type="entry name" value="NAD(P)-binding Rossmann-like Domain"/>
    <property type="match status" value="1"/>
</dbReference>
<dbReference type="HAMAP" id="MF_00046">
    <property type="entry name" value="MurC"/>
    <property type="match status" value="1"/>
</dbReference>
<dbReference type="InterPro" id="IPR036565">
    <property type="entry name" value="Mur-like_cat_sf"/>
</dbReference>
<dbReference type="InterPro" id="IPR004101">
    <property type="entry name" value="Mur_ligase_C"/>
</dbReference>
<dbReference type="InterPro" id="IPR036615">
    <property type="entry name" value="Mur_ligase_C_dom_sf"/>
</dbReference>
<dbReference type="InterPro" id="IPR013221">
    <property type="entry name" value="Mur_ligase_cen"/>
</dbReference>
<dbReference type="InterPro" id="IPR000713">
    <property type="entry name" value="Mur_ligase_N"/>
</dbReference>
<dbReference type="InterPro" id="IPR050061">
    <property type="entry name" value="MurCDEF_pg_biosynth"/>
</dbReference>
<dbReference type="InterPro" id="IPR005758">
    <property type="entry name" value="UDP-N-AcMur_Ala_ligase_MurC"/>
</dbReference>
<dbReference type="NCBIfam" id="TIGR01082">
    <property type="entry name" value="murC"/>
    <property type="match status" value="1"/>
</dbReference>
<dbReference type="PANTHER" id="PTHR43445:SF3">
    <property type="entry name" value="UDP-N-ACETYLMURAMATE--L-ALANINE LIGASE"/>
    <property type="match status" value="1"/>
</dbReference>
<dbReference type="PANTHER" id="PTHR43445">
    <property type="entry name" value="UDP-N-ACETYLMURAMATE--L-ALANINE LIGASE-RELATED"/>
    <property type="match status" value="1"/>
</dbReference>
<dbReference type="Pfam" id="PF01225">
    <property type="entry name" value="Mur_ligase"/>
    <property type="match status" value="1"/>
</dbReference>
<dbReference type="Pfam" id="PF02875">
    <property type="entry name" value="Mur_ligase_C"/>
    <property type="match status" value="1"/>
</dbReference>
<dbReference type="Pfam" id="PF08245">
    <property type="entry name" value="Mur_ligase_M"/>
    <property type="match status" value="1"/>
</dbReference>
<dbReference type="SUPFAM" id="SSF51984">
    <property type="entry name" value="MurCD N-terminal domain"/>
    <property type="match status" value="1"/>
</dbReference>
<dbReference type="SUPFAM" id="SSF53623">
    <property type="entry name" value="MurD-like peptide ligases, catalytic domain"/>
    <property type="match status" value="1"/>
</dbReference>
<dbReference type="SUPFAM" id="SSF53244">
    <property type="entry name" value="MurD-like peptide ligases, peptide-binding domain"/>
    <property type="match status" value="1"/>
</dbReference>
<name>MURC_RUTMC</name>
<feature type="chain" id="PRO_1000004401" description="UDP-N-acetylmuramate--L-alanine ligase">
    <location>
        <begin position="1"/>
        <end position="469"/>
    </location>
</feature>
<feature type="binding site" evidence="1">
    <location>
        <begin position="119"/>
        <end position="125"/>
    </location>
    <ligand>
        <name>ATP</name>
        <dbReference type="ChEBI" id="CHEBI:30616"/>
    </ligand>
</feature>
<protein>
    <recommendedName>
        <fullName evidence="1">UDP-N-acetylmuramate--L-alanine ligase</fullName>
        <ecNumber evidence="1">6.3.2.8</ecNumber>
    </recommendedName>
    <alternativeName>
        <fullName evidence="1">UDP-N-acetylmuramoyl-L-alanine synthetase</fullName>
    </alternativeName>
</protein>
<gene>
    <name evidence="1" type="primary">murC</name>
    <name type="ordered locus">Rmag_0757</name>
</gene>
<reference key="1">
    <citation type="journal article" date="2007" name="Science">
        <title>The Calyptogena magnifica chemoautotrophic symbiont genome.</title>
        <authorList>
            <person name="Newton I.L.G."/>
            <person name="Woyke T."/>
            <person name="Auchtung T.A."/>
            <person name="Dilly G.F."/>
            <person name="Dutton R.J."/>
            <person name="Fisher M.C."/>
            <person name="Fontanez K.M."/>
            <person name="Lau E."/>
            <person name="Stewart F.J."/>
            <person name="Richardson P.M."/>
            <person name="Barry K.W."/>
            <person name="Saunders E."/>
            <person name="Detter J.C."/>
            <person name="Wu D."/>
            <person name="Eisen J.A."/>
            <person name="Cavanaugh C.M."/>
        </authorList>
    </citation>
    <scope>NUCLEOTIDE SEQUENCE [LARGE SCALE GENOMIC DNA]</scope>
</reference>
<keyword id="KW-0067">ATP-binding</keyword>
<keyword id="KW-0131">Cell cycle</keyword>
<keyword id="KW-0132">Cell division</keyword>
<keyword id="KW-0133">Cell shape</keyword>
<keyword id="KW-0961">Cell wall biogenesis/degradation</keyword>
<keyword id="KW-0963">Cytoplasm</keyword>
<keyword id="KW-0436">Ligase</keyword>
<keyword id="KW-0547">Nucleotide-binding</keyword>
<keyword id="KW-0573">Peptidoglycan synthesis</keyword>
<proteinExistence type="inferred from homology"/>